<comment type="function">
    <text evidence="1">Binds directly to 23S ribosomal RNA and is necessary for the in vitro assembly process of the 50S ribosomal subunit. It is not involved in the protein synthesizing functions of that subunit.</text>
</comment>
<comment type="similarity">
    <text evidence="1">Belongs to the bacterial ribosomal protein bL20 family.</text>
</comment>
<accession>A7ZMI4</accession>
<proteinExistence type="inferred from homology"/>
<evidence type="ECO:0000255" key="1">
    <source>
        <dbReference type="HAMAP-Rule" id="MF_00382"/>
    </source>
</evidence>
<evidence type="ECO:0000305" key="2"/>
<dbReference type="EMBL" id="CP000800">
    <property type="protein sequence ID" value="ABV17114.1"/>
    <property type="molecule type" value="Genomic_DNA"/>
</dbReference>
<dbReference type="RefSeq" id="WP_000124850.1">
    <property type="nucleotide sequence ID" value="NC_009801.1"/>
</dbReference>
<dbReference type="SMR" id="A7ZMI4"/>
<dbReference type="GeneID" id="98388757"/>
<dbReference type="KEGG" id="ecw:EcE24377A_1935"/>
<dbReference type="HOGENOM" id="CLU_123265_0_1_6"/>
<dbReference type="Proteomes" id="UP000001122">
    <property type="component" value="Chromosome"/>
</dbReference>
<dbReference type="GO" id="GO:1990904">
    <property type="term" value="C:ribonucleoprotein complex"/>
    <property type="evidence" value="ECO:0007669"/>
    <property type="project" value="UniProtKB-KW"/>
</dbReference>
<dbReference type="GO" id="GO:0005840">
    <property type="term" value="C:ribosome"/>
    <property type="evidence" value="ECO:0007669"/>
    <property type="project" value="UniProtKB-KW"/>
</dbReference>
<dbReference type="GO" id="GO:0019843">
    <property type="term" value="F:rRNA binding"/>
    <property type="evidence" value="ECO:0007669"/>
    <property type="project" value="UniProtKB-UniRule"/>
</dbReference>
<dbReference type="GO" id="GO:0003735">
    <property type="term" value="F:structural constituent of ribosome"/>
    <property type="evidence" value="ECO:0007669"/>
    <property type="project" value="InterPro"/>
</dbReference>
<dbReference type="GO" id="GO:0000027">
    <property type="term" value="P:ribosomal large subunit assembly"/>
    <property type="evidence" value="ECO:0007669"/>
    <property type="project" value="UniProtKB-UniRule"/>
</dbReference>
<dbReference type="GO" id="GO:0006412">
    <property type="term" value="P:translation"/>
    <property type="evidence" value="ECO:0007669"/>
    <property type="project" value="InterPro"/>
</dbReference>
<dbReference type="CDD" id="cd07026">
    <property type="entry name" value="Ribosomal_L20"/>
    <property type="match status" value="1"/>
</dbReference>
<dbReference type="FunFam" id="1.10.1900.20:FF:000001">
    <property type="entry name" value="50S ribosomal protein L20"/>
    <property type="match status" value="1"/>
</dbReference>
<dbReference type="Gene3D" id="6.10.160.10">
    <property type="match status" value="1"/>
</dbReference>
<dbReference type="Gene3D" id="1.10.1900.20">
    <property type="entry name" value="Ribosomal protein L20"/>
    <property type="match status" value="1"/>
</dbReference>
<dbReference type="HAMAP" id="MF_00382">
    <property type="entry name" value="Ribosomal_bL20"/>
    <property type="match status" value="1"/>
</dbReference>
<dbReference type="InterPro" id="IPR005813">
    <property type="entry name" value="Ribosomal_bL20"/>
</dbReference>
<dbReference type="InterPro" id="IPR049946">
    <property type="entry name" value="RIBOSOMAL_L20_CS"/>
</dbReference>
<dbReference type="InterPro" id="IPR035566">
    <property type="entry name" value="Ribosomal_protein_bL20_C"/>
</dbReference>
<dbReference type="NCBIfam" id="TIGR01032">
    <property type="entry name" value="rplT_bact"/>
    <property type="match status" value="1"/>
</dbReference>
<dbReference type="PANTHER" id="PTHR10986">
    <property type="entry name" value="39S RIBOSOMAL PROTEIN L20"/>
    <property type="match status" value="1"/>
</dbReference>
<dbReference type="Pfam" id="PF00453">
    <property type="entry name" value="Ribosomal_L20"/>
    <property type="match status" value="1"/>
</dbReference>
<dbReference type="PRINTS" id="PR00062">
    <property type="entry name" value="RIBOSOMALL20"/>
</dbReference>
<dbReference type="SUPFAM" id="SSF74731">
    <property type="entry name" value="Ribosomal protein L20"/>
    <property type="match status" value="1"/>
</dbReference>
<dbReference type="PROSITE" id="PS00937">
    <property type="entry name" value="RIBOSOMAL_L20"/>
    <property type="match status" value="1"/>
</dbReference>
<gene>
    <name evidence="1" type="primary">rplT</name>
    <name type="ordered locus">EcE24377A_1935</name>
</gene>
<reference key="1">
    <citation type="journal article" date="2008" name="J. Bacteriol.">
        <title>The pangenome structure of Escherichia coli: comparative genomic analysis of E. coli commensal and pathogenic isolates.</title>
        <authorList>
            <person name="Rasko D.A."/>
            <person name="Rosovitz M.J."/>
            <person name="Myers G.S.A."/>
            <person name="Mongodin E.F."/>
            <person name="Fricke W.F."/>
            <person name="Gajer P."/>
            <person name="Crabtree J."/>
            <person name="Sebaihia M."/>
            <person name="Thomson N.R."/>
            <person name="Chaudhuri R."/>
            <person name="Henderson I.R."/>
            <person name="Sperandio V."/>
            <person name="Ravel J."/>
        </authorList>
    </citation>
    <scope>NUCLEOTIDE SEQUENCE [LARGE SCALE GENOMIC DNA]</scope>
    <source>
        <strain>E24377A / ETEC</strain>
    </source>
</reference>
<keyword id="KW-1185">Reference proteome</keyword>
<keyword id="KW-0687">Ribonucleoprotein</keyword>
<keyword id="KW-0689">Ribosomal protein</keyword>
<keyword id="KW-0694">RNA-binding</keyword>
<keyword id="KW-0699">rRNA-binding</keyword>
<name>RL20_ECO24</name>
<protein>
    <recommendedName>
        <fullName evidence="1">Large ribosomal subunit protein bL20</fullName>
    </recommendedName>
    <alternativeName>
        <fullName evidence="2">50S ribosomal protein L20</fullName>
    </alternativeName>
</protein>
<organism>
    <name type="scientific">Escherichia coli O139:H28 (strain E24377A / ETEC)</name>
    <dbReference type="NCBI Taxonomy" id="331111"/>
    <lineage>
        <taxon>Bacteria</taxon>
        <taxon>Pseudomonadati</taxon>
        <taxon>Pseudomonadota</taxon>
        <taxon>Gammaproteobacteria</taxon>
        <taxon>Enterobacterales</taxon>
        <taxon>Enterobacteriaceae</taxon>
        <taxon>Escherichia</taxon>
    </lineage>
</organism>
<feature type="chain" id="PRO_1000060687" description="Large ribosomal subunit protein bL20">
    <location>
        <begin position="1"/>
        <end position="118"/>
    </location>
</feature>
<sequence>MARVKRGVIARARHKKILKQAKGYYGARSRVYRVAFQAVIKAGQYAYRDRRQRKRQFRQLWIARINAAARQNGISYSKFINGLKKASVEIDRKILADIAVFDKVAFTALVEKAKAALA</sequence>